<sequence>MSDLDLSQYGITPDTTLRNADPARLYEEAIHYDPTAAIAHSGALTIRSGEKTGRSPADKRIVRHPNSEDDIWWGPINMEIDDHTFEINKERAQDYLNTRQRIYVMDGFAGWDPAHRLKVRIICSRPYHALFMHNMLIRPSQEELASFGEPDFVIYNAGEFPANRQTKHMSSKTSVDLSFENQEMVILGTEYAGEMKKGVFTVMHYLMPKKDVLSMHCSANEGDEGDVSLFFGLSGTGKTTLSADPNRKLIGDDEHCWSDDGVFNIEGGCYAKAVGLSEEEEPEIYNAIRYGTVLENMVYDEDTRAVDYDDTSITQNTRASYPLDYIDRAKIPGMGGHPDNIIFLTYDAFGVMPPVSKLTPEQAMYHFISGYTAKVAGTEVGVDEPQATFSACFGAAFLVWPPDKYAEMLAEKIRAHDAEAWLVNTGITGGPYGVGHRVPLEHTRAMIDAIHDGSLLDAPKKTEPVFGLDVPTECPNVPNDILMPRETWDDPQAYDEKAEHLVGLFHDHFEKYEDEAAPAIAEAGPQLQAA</sequence>
<protein>
    <recommendedName>
        <fullName evidence="1">Phosphoenolpyruvate carboxykinase (ATP) 2</fullName>
        <shortName evidence="1">PCK 2</shortName>
        <shortName evidence="1">PEP carboxykinase 2</shortName>
        <shortName evidence="1">PEPCK 2</shortName>
        <ecNumber evidence="1">4.1.1.49</ecNumber>
    </recommendedName>
</protein>
<name>PCKA2_SALRD</name>
<reference key="1">
    <citation type="journal article" date="2005" name="Proc. Natl. Acad. Sci. U.S.A.">
        <title>The genome of Salinibacter ruber: convergence and gene exchange among hyperhalophilic bacteria and archaea.</title>
        <authorList>
            <person name="Mongodin E.F."/>
            <person name="Nelson K.E."/>
            <person name="Daugherty S."/>
            <person name="DeBoy R.T."/>
            <person name="Wister J."/>
            <person name="Khouri H."/>
            <person name="Weidman J."/>
            <person name="Walsh D.A."/>
            <person name="Papke R.T."/>
            <person name="Sanchez Perez G."/>
            <person name="Sharma A.K."/>
            <person name="Nesbo C.L."/>
            <person name="MacLeod D."/>
            <person name="Bapteste E."/>
            <person name="Doolittle W.F."/>
            <person name="Charlebois R.L."/>
            <person name="Legault B."/>
            <person name="Rodriguez-Valera F."/>
        </authorList>
    </citation>
    <scope>NUCLEOTIDE SEQUENCE [LARGE SCALE GENOMIC DNA]</scope>
    <source>
        <strain>DSM 13855 / CECT 5946 / M31</strain>
    </source>
</reference>
<feature type="chain" id="PRO_0000236939" description="Phosphoenolpyruvate carboxykinase (ATP) 2">
    <location>
        <begin position="1"/>
        <end position="530"/>
    </location>
</feature>
<feature type="binding site" evidence="1">
    <location>
        <position position="54"/>
    </location>
    <ligand>
        <name>substrate</name>
    </ligand>
</feature>
<feature type="binding site" evidence="1">
    <location>
        <position position="191"/>
    </location>
    <ligand>
        <name>substrate</name>
    </ligand>
</feature>
<feature type="binding site" evidence="1">
    <location>
        <position position="197"/>
    </location>
    <ligand>
        <name>ATP</name>
        <dbReference type="ChEBI" id="CHEBI:30616"/>
    </ligand>
</feature>
<feature type="binding site" evidence="1">
    <location>
        <position position="197"/>
    </location>
    <ligand>
        <name>Mn(2+)</name>
        <dbReference type="ChEBI" id="CHEBI:29035"/>
    </ligand>
</feature>
<feature type="binding site" evidence="1">
    <location>
        <position position="197"/>
    </location>
    <ligand>
        <name>substrate</name>
    </ligand>
</feature>
<feature type="binding site" evidence="1">
    <location>
        <position position="216"/>
    </location>
    <ligand>
        <name>ATP</name>
        <dbReference type="ChEBI" id="CHEBI:30616"/>
    </ligand>
</feature>
<feature type="binding site" evidence="1">
    <location>
        <position position="216"/>
    </location>
    <ligand>
        <name>Mn(2+)</name>
        <dbReference type="ChEBI" id="CHEBI:29035"/>
    </ligand>
</feature>
<feature type="binding site" evidence="1">
    <location>
        <begin position="232"/>
        <end position="240"/>
    </location>
    <ligand>
        <name>ATP</name>
        <dbReference type="ChEBI" id="CHEBI:30616"/>
    </ligand>
</feature>
<feature type="binding site" evidence="1">
    <location>
        <position position="253"/>
    </location>
    <ligand>
        <name>Mn(2+)</name>
        <dbReference type="ChEBI" id="CHEBI:29035"/>
    </ligand>
</feature>
<feature type="binding site" evidence="1">
    <location>
        <position position="281"/>
    </location>
    <ligand>
        <name>ATP</name>
        <dbReference type="ChEBI" id="CHEBI:30616"/>
    </ligand>
</feature>
<feature type="binding site" evidence="1">
    <location>
        <position position="318"/>
    </location>
    <ligand>
        <name>ATP</name>
        <dbReference type="ChEBI" id="CHEBI:30616"/>
    </ligand>
</feature>
<feature type="binding site" evidence="1">
    <location>
        <position position="318"/>
    </location>
    <ligand>
        <name>substrate</name>
    </ligand>
</feature>
<feature type="binding site" evidence="1">
    <location>
        <begin position="437"/>
        <end position="438"/>
    </location>
    <ligand>
        <name>ATP</name>
        <dbReference type="ChEBI" id="CHEBI:30616"/>
    </ligand>
</feature>
<feature type="binding site" evidence="1">
    <location>
        <position position="443"/>
    </location>
    <ligand>
        <name>ATP</name>
        <dbReference type="ChEBI" id="CHEBI:30616"/>
    </ligand>
</feature>
<organism>
    <name type="scientific">Salinibacter ruber (strain DSM 13855 / M31)</name>
    <dbReference type="NCBI Taxonomy" id="309807"/>
    <lineage>
        <taxon>Bacteria</taxon>
        <taxon>Pseudomonadati</taxon>
        <taxon>Rhodothermota</taxon>
        <taxon>Rhodothermia</taxon>
        <taxon>Rhodothermales</taxon>
        <taxon>Salinibacteraceae</taxon>
        <taxon>Salinibacter</taxon>
    </lineage>
</organism>
<evidence type="ECO:0000255" key="1">
    <source>
        <dbReference type="HAMAP-Rule" id="MF_00453"/>
    </source>
</evidence>
<accession>Q2S008</accession>
<proteinExistence type="inferred from homology"/>
<dbReference type="EC" id="4.1.1.49" evidence="1"/>
<dbReference type="EMBL" id="CP000159">
    <property type="protein sequence ID" value="ABC44838.1"/>
    <property type="molecule type" value="Genomic_DNA"/>
</dbReference>
<dbReference type="RefSeq" id="WP_011405091.1">
    <property type="nucleotide sequence ID" value="NC_007677.1"/>
</dbReference>
<dbReference type="RefSeq" id="YP_446473.1">
    <property type="nucleotide sequence ID" value="NC_007677.1"/>
</dbReference>
<dbReference type="SMR" id="Q2S008"/>
<dbReference type="STRING" id="309807.SRU_2373"/>
<dbReference type="EnsemblBacteria" id="ABC44838">
    <property type="protein sequence ID" value="ABC44838"/>
    <property type="gene ID" value="SRU_2373"/>
</dbReference>
<dbReference type="KEGG" id="sru:SRU_2373"/>
<dbReference type="PATRIC" id="fig|309807.25.peg.2472"/>
<dbReference type="eggNOG" id="COG1866">
    <property type="taxonomic scope" value="Bacteria"/>
</dbReference>
<dbReference type="HOGENOM" id="CLU_018247_0_1_10"/>
<dbReference type="OrthoDB" id="9806325at2"/>
<dbReference type="UniPathway" id="UPA00138"/>
<dbReference type="Proteomes" id="UP000008674">
    <property type="component" value="Chromosome"/>
</dbReference>
<dbReference type="GO" id="GO:0005829">
    <property type="term" value="C:cytosol"/>
    <property type="evidence" value="ECO:0007669"/>
    <property type="project" value="TreeGrafter"/>
</dbReference>
<dbReference type="GO" id="GO:0005524">
    <property type="term" value="F:ATP binding"/>
    <property type="evidence" value="ECO:0007669"/>
    <property type="project" value="UniProtKB-UniRule"/>
</dbReference>
<dbReference type="GO" id="GO:0046872">
    <property type="term" value="F:metal ion binding"/>
    <property type="evidence" value="ECO:0007669"/>
    <property type="project" value="UniProtKB-KW"/>
</dbReference>
<dbReference type="GO" id="GO:0004612">
    <property type="term" value="F:phosphoenolpyruvate carboxykinase (ATP) activity"/>
    <property type="evidence" value="ECO:0007669"/>
    <property type="project" value="UniProtKB-UniRule"/>
</dbReference>
<dbReference type="GO" id="GO:0006094">
    <property type="term" value="P:gluconeogenesis"/>
    <property type="evidence" value="ECO:0007669"/>
    <property type="project" value="UniProtKB-UniRule"/>
</dbReference>
<dbReference type="CDD" id="cd00484">
    <property type="entry name" value="PEPCK_ATP"/>
    <property type="match status" value="1"/>
</dbReference>
<dbReference type="FunFam" id="2.170.8.10:FF:000001">
    <property type="entry name" value="Phosphoenolpyruvate carboxykinase (ATP)"/>
    <property type="match status" value="1"/>
</dbReference>
<dbReference type="Gene3D" id="3.90.228.20">
    <property type="match status" value="1"/>
</dbReference>
<dbReference type="Gene3D" id="3.40.449.10">
    <property type="entry name" value="Phosphoenolpyruvate Carboxykinase, domain 1"/>
    <property type="match status" value="1"/>
</dbReference>
<dbReference type="Gene3D" id="2.170.8.10">
    <property type="entry name" value="Phosphoenolpyruvate Carboxykinase, domain 2"/>
    <property type="match status" value="1"/>
</dbReference>
<dbReference type="HAMAP" id="MF_00453">
    <property type="entry name" value="PEPCK_ATP"/>
    <property type="match status" value="1"/>
</dbReference>
<dbReference type="InterPro" id="IPR001272">
    <property type="entry name" value="PEP_carboxykinase_ATP"/>
</dbReference>
<dbReference type="InterPro" id="IPR013035">
    <property type="entry name" value="PEP_carboxykinase_C"/>
</dbReference>
<dbReference type="InterPro" id="IPR008210">
    <property type="entry name" value="PEP_carboxykinase_N"/>
</dbReference>
<dbReference type="InterPro" id="IPR015994">
    <property type="entry name" value="PEPCK_ATP_CS"/>
</dbReference>
<dbReference type="NCBIfam" id="TIGR00224">
    <property type="entry name" value="pckA"/>
    <property type="match status" value="1"/>
</dbReference>
<dbReference type="NCBIfam" id="NF006820">
    <property type="entry name" value="PRK09344.1-2"/>
    <property type="match status" value="1"/>
</dbReference>
<dbReference type="NCBIfam" id="NF006821">
    <property type="entry name" value="PRK09344.1-3"/>
    <property type="match status" value="1"/>
</dbReference>
<dbReference type="PANTHER" id="PTHR30031:SF0">
    <property type="entry name" value="PHOSPHOENOLPYRUVATE CARBOXYKINASE (ATP)"/>
    <property type="match status" value="1"/>
</dbReference>
<dbReference type="PANTHER" id="PTHR30031">
    <property type="entry name" value="PHOSPHOENOLPYRUVATE CARBOXYKINASE ATP"/>
    <property type="match status" value="1"/>
</dbReference>
<dbReference type="Pfam" id="PF01293">
    <property type="entry name" value="PEPCK_ATP"/>
    <property type="match status" value="1"/>
</dbReference>
<dbReference type="PIRSF" id="PIRSF006294">
    <property type="entry name" value="PEP_crbxkin"/>
    <property type="match status" value="1"/>
</dbReference>
<dbReference type="SUPFAM" id="SSF68923">
    <property type="entry name" value="PEP carboxykinase N-terminal domain"/>
    <property type="match status" value="1"/>
</dbReference>
<dbReference type="SUPFAM" id="SSF53795">
    <property type="entry name" value="PEP carboxykinase-like"/>
    <property type="match status" value="1"/>
</dbReference>
<dbReference type="PROSITE" id="PS00532">
    <property type="entry name" value="PEPCK_ATP"/>
    <property type="match status" value="1"/>
</dbReference>
<gene>
    <name evidence="1" type="primary">pckA2</name>
    <name type="ordered locus">SRU_2373</name>
</gene>
<comment type="function">
    <text evidence="1">Involved in the gluconeogenesis. Catalyzes the conversion of oxaloacetate (OAA) to phosphoenolpyruvate (PEP) through direct phosphoryl transfer between the nucleoside triphosphate and OAA.</text>
</comment>
<comment type="catalytic activity">
    <reaction evidence="1">
        <text>oxaloacetate + ATP = phosphoenolpyruvate + ADP + CO2</text>
        <dbReference type="Rhea" id="RHEA:18617"/>
        <dbReference type="ChEBI" id="CHEBI:16452"/>
        <dbReference type="ChEBI" id="CHEBI:16526"/>
        <dbReference type="ChEBI" id="CHEBI:30616"/>
        <dbReference type="ChEBI" id="CHEBI:58702"/>
        <dbReference type="ChEBI" id="CHEBI:456216"/>
        <dbReference type="EC" id="4.1.1.49"/>
    </reaction>
</comment>
<comment type="cofactor">
    <cofactor evidence="1">
        <name>Mn(2+)</name>
        <dbReference type="ChEBI" id="CHEBI:29035"/>
    </cofactor>
    <text evidence="1">Binds 1 Mn(2+) ion per subunit.</text>
</comment>
<comment type="pathway">
    <text evidence="1">Carbohydrate biosynthesis; gluconeogenesis.</text>
</comment>
<comment type="subcellular location">
    <subcellularLocation>
        <location evidence="1">Cytoplasm</location>
    </subcellularLocation>
</comment>
<comment type="similarity">
    <text evidence="1">Belongs to the phosphoenolpyruvate carboxykinase (ATP) family.</text>
</comment>
<keyword id="KW-0067">ATP-binding</keyword>
<keyword id="KW-0963">Cytoplasm</keyword>
<keyword id="KW-0210">Decarboxylase</keyword>
<keyword id="KW-0312">Gluconeogenesis</keyword>
<keyword id="KW-0456">Lyase</keyword>
<keyword id="KW-0464">Manganese</keyword>
<keyword id="KW-0479">Metal-binding</keyword>
<keyword id="KW-0547">Nucleotide-binding</keyword>
<keyword id="KW-1185">Reference proteome</keyword>